<reference key="1">
    <citation type="journal article" date="1994" name="Neuron">
        <title>Members of a family of Drosophila putative odorant-binding proteins are expressed in different subsets of olfactory hairs.</title>
        <authorList>
            <person name="Pikielny C.W."/>
            <person name="Hasan G."/>
            <person name="Rouyer F."/>
            <person name="Rosbash M."/>
        </authorList>
    </citation>
    <scope>NUCLEOTIDE SEQUENCE [MRNA] (ISOFORM A)</scope>
    <scope>TISSUE SPECIFICITY</scope>
    <source>
        <strain>Canton-S</strain>
        <tissue>Antenna</tissue>
    </source>
</reference>
<reference key="2">
    <citation type="journal article" date="2000" name="Science">
        <title>The genome sequence of Drosophila melanogaster.</title>
        <authorList>
            <person name="Adams M.D."/>
            <person name="Celniker S.E."/>
            <person name="Holt R.A."/>
            <person name="Evans C.A."/>
            <person name="Gocayne J.D."/>
            <person name="Amanatides P.G."/>
            <person name="Scherer S.E."/>
            <person name="Li P.W."/>
            <person name="Hoskins R.A."/>
            <person name="Galle R.F."/>
            <person name="George R.A."/>
            <person name="Lewis S.E."/>
            <person name="Richards S."/>
            <person name="Ashburner M."/>
            <person name="Henderson S.N."/>
            <person name="Sutton G.G."/>
            <person name="Wortman J.R."/>
            <person name="Yandell M.D."/>
            <person name="Zhang Q."/>
            <person name="Chen L.X."/>
            <person name="Brandon R.C."/>
            <person name="Rogers Y.-H.C."/>
            <person name="Blazej R.G."/>
            <person name="Champe M."/>
            <person name="Pfeiffer B.D."/>
            <person name="Wan K.H."/>
            <person name="Doyle C."/>
            <person name="Baxter E.G."/>
            <person name="Helt G."/>
            <person name="Nelson C.R."/>
            <person name="Miklos G.L.G."/>
            <person name="Abril J.F."/>
            <person name="Agbayani A."/>
            <person name="An H.-J."/>
            <person name="Andrews-Pfannkoch C."/>
            <person name="Baldwin D."/>
            <person name="Ballew R.M."/>
            <person name="Basu A."/>
            <person name="Baxendale J."/>
            <person name="Bayraktaroglu L."/>
            <person name="Beasley E.M."/>
            <person name="Beeson K.Y."/>
            <person name="Benos P.V."/>
            <person name="Berman B.P."/>
            <person name="Bhandari D."/>
            <person name="Bolshakov S."/>
            <person name="Borkova D."/>
            <person name="Botchan M.R."/>
            <person name="Bouck J."/>
            <person name="Brokstein P."/>
            <person name="Brottier P."/>
            <person name="Burtis K.C."/>
            <person name="Busam D.A."/>
            <person name="Butler H."/>
            <person name="Cadieu E."/>
            <person name="Center A."/>
            <person name="Chandra I."/>
            <person name="Cherry J.M."/>
            <person name="Cawley S."/>
            <person name="Dahlke C."/>
            <person name="Davenport L.B."/>
            <person name="Davies P."/>
            <person name="de Pablos B."/>
            <person name="Delcher A."/>
            <person name="Deng Z."/>
            <person name="Mays A.D."/>
            <person name="Dew I."/>
            <person name="Dietz S.M."/>
            <person name="Dodson K."/>
            <person name="Doup L.E."/>
            <person name="Downes M."/>
            <person name="Dugan-Rocha S."/>
            <person name="Dunkov B.C."/>
            <person name="Dunn P."/>
            <person name="Durbin K.J."/>
            <person name="Evangelista C.C."/>
            <person name="Ferraz C."/>
            <person name="Ferriera S."/>
            <person name="Fleischmann W."/>
            <person name="Fosler C."/>
            <person name="Gabrielian A.E."/>
            <person name="Garg N.S."/>
            <person name="Gelbart W.M."/>
            <person name="Glasser K."/>
            <person name="Glodek A."/>
            <person name="Gong F."/>
            <person name="Gorrell J.H."/>
            <person name="Gu Z."/>
            <person name="Guan P."/>
            <person name="Harris M."/>
            <person name="Harris N.L."/>
            <person name="Harvey D.A."/>
            <person name="Heiman T.J."/>
            <person name="Hernandez J.R."/>
            <person name="Houck J."/>
            <person name="Hostin D."/>
            <person name="Houston K.A."/>
            <person name="Howland T.J."/>
            <person name="Wei M.-H."/>
            <person name="Ibegwam C."/>
            <person name="Jalali M."/>
            <person name="Kalush F."/>
            <person name="Karpen G.H."/>
            <person name="Ke Z."/>
            <person name="Kennison J.A."/>
            <person name="Ketchum K.A."/>
            <person name="Kimmel B.E."/>
            <person name="Kodira C.D."/>
            <person name="Kraft C.L."/>
            <person name="Kravitz S."/>
            <person name="Kulp D."/>
            <person name="Lai Z."/>
            <person name="Lasko P."/>
            <person name="Lei Y."/>
            <person name="Levitsky A.A."/>
            <person name="Li J.H."/>
            <person name="Li Z."/>
            <person name="Liang Y."/>
            <person name="Lin X."/>
            <person name="Liu X."/>
            <person name="Mattei B."/>
            <person name="McIntosh T.C."/>
            <person name="McLeod M.P."/>
            <person name="McPherson D."/>
            <person name="Merkulov G."/>
            <person name="Milshina N.V."/>
            <person name="Mobarry C."/>
            <person name="Morris J."/>
            <person name="Moshrefi A."/>
            <person name="Mount S.M."/>
            <person name="Moy M."/>
            <person name="Murphy B."/>
            <person name="Murphy L."/>
            <person name="Muzny D.M."/>
            <person name="Nelson D.L."/>
            <person name="Nelson D.R."/>
            <person name="Nelson K.A."/>
            <person name="Nixon K."/>
            <person name="Nusskern D.R."/>
            <person name="Pacleb J.M."/>
            <person name="Palazzolo M."/>
            <person name="Pittman G.S."/>
            <person name="Pan S."/>
            <person name="Pollard J."/>
            <person name="Puri V."/>
            <person name="Reese M.G."/>
            <person name="Reinert K."/>
            <person name="Remington K."/>
            <person name="Saunders R.D.C."/>
            <person name="Scheeler F."/>
            <person name="Shen H."/>
            <person name="Shue B.C."/>
            <person name="Siden-Kiamos I."/>
            <person name="Simpson M."/>
            <person name="Skupski M.P."/>
            <person name="Smith T.J."/>
            <person name="Spier E."/>
            <person name="Spradling A.C."/>
            <person name="Stapleton M."/>
            <person name="Strong R."/>
            <person name="Sun E."/>
            <person name="Svirskas R."/>
            <person name="Tector C."/>
            <person name="Turner R."/>
            <person name="Venter E."/>
            <person name="Wang A.H."/>
            <person name="Wang X."/>
            <person name="Wang Z.-Y."/>
            <person name="Wassarman D.A."/>
            <person name="Weinstock G.M."/>
            <person name="Weissenbach J."/>
            <person name="Williams S.M."/>
            <person name="Woodage T."/>
            <person name="Worley K.C."/>
            <person name="Wu D."/>
            <person name="Yang S."/>
            <person name="Yao Q.A."/>
            <person name="Ye J."/>
            <person name="Yeh R.-F."/>
            <person name="Zaveri J.S."/>
            <person name="Zhan M."/>
            <person name="Zhang G."/>
            <person name="Zhao Q."/>
            <person name="Zheng L."/>
            <person name="Zheng X.H."/>
            <person name="Zhong F.N."/>
            <person name="Zhong W."/>
            <person name="Zhou X."/>
            <person name="Zhu S.C."/>
            <person name="Zhu X."/>
            <person name="Smith H.O."/>
            <person name="Gibbs R.A."/>
            <person name="Myers E.W."/>
            <person name="Rubin G.M."/>
            <person name="Venter J.C."/>
        </authorList>
    </citation>
    <scope>NUCLEOTIDE SEQUENCE [LARGE SCALE GENOMIC DNA]</scope>
    <source>
        <strain>Berkeley</strain>
    </source>
</reference>
<reference key="3">
    <citation type="journal article" date="2002" name="Genome Biol.">
        <title>Annotation of the Drosophila melanogaster euchromatic genome: a systematic review.</title>
        <authorList>
            <person name="Misra S."/>
            <person name="Crosby M.A."/>
            <person name="Mungall C.J."/>
            <person name="Matthews B.B."/>
            <person name="Campbell K.S."/>
            <person name="Hradecky P."/>
            <person name="Huang Y."/>
            <person name="Kaminker J.S."/>
            <person name="Millburn G.H."/>
            <person name="Prochnik S.E."/>
            <person name="Smith C.D."/>
            <person name="Tupy J.L."/>
            <person name="Whitfield E.J."/>
            <person name="Bayraktaroglu L."/>
            <person name="Berman B.P."/>
            <person name="Bettencourt B.R."/>
            <person name="Celniker S.E."/>
            <person name="de Grey A.D.N.J."/>
            <person name="Drysdale R.A."/>
            <person name="Harris N.L."/>
            <person name="Richter J."/>
            <person name="Russo S."/>
            <person name="Schroeder A.J."/>
            <person name="Shu S.Q."/>
            <person name="Stapleton M."/>
            <person name="Yamada C."/>
            <person name="Ashburner M."/>
            <person name="Gelbart W.M."/>
            <person name="Rubin G.M."/>
            <person name="Lewis S.E."/>
        </authorList>
    </citation>
    <scope>GENOME REANNOTATION</scope>
    <scope>ALTERNATIVE SPLICING</scope>
    <source>
        <strain>Berkeley</strain>
    </source>
</reference>
<reference key="4">
    <citation type="submission" date="2008-05" db="EMBL/GenBank/DDBJ databases">
        <authorList>
            <person name="Carlson J.W."/>
            <person name="Booth B."/>
            <person name="Frise E."/>
            <person name="Park S."/>
            <person name="Wan K.H."/>
            <person name="Yu C."/>
            <person name="Celniker S.E."/>
        </authorList>
    </citation>
    <scope>NUCLEOTIDE SEQUENCE [LARGE SCALE MRNA] (ISOFORM A)</scope>
    <source>
        <strain>Berkeley</strain>
    </source>
</reference>
<organism>
    <name type="scientific">Drosophila melanogaster</name>
    <name type="common">Fruit fly</name>
    <dbReference type="NCBI Taxonomy" id="7227"/>
    <lineage>
        <taxon>Eukaryota</taxon>
        <taxon>Metazoa</taxon>
        <taxon>Ecdysozoa</taxon>
        <taxon>Arthropoda</taxon>
        <taxon>Hexapoda</taxon>
        <taxon>Insecta</taxon>
        <taxon>Pterygota</taxon>
        <taxon>Neoptera</taxon>
        <taxon>Endopterygota</taxon>
        <taxon>Diptera</taxon>
        <taxon>Brachycera</taxon>
        <taxon>Muscomorpha</taxon>
        <taxon>Ephydroidea</taxon>
        <taxon>Drosophilidae</taxon>
        <taxon>Drosophila</taxon>
        <taxon>Sophophora</taxon>
    </lineage>
</organism>
<sequence>MYSALVRACAVIAFLILSPNCARALQDHAKDNGDIFIINYDSFDGDVDDISTTTSAPREADYVDFDEVNRNCNASFITSMTNVLQFNNTGDLPDDKDKVTSMCYFHCFFEKSGLMTDYKLNTDLVRKYVWPATGDSVEACEAEGKDETNACMRGYAIVKCVFTRALTDARNKPTV</sequence>
<proteinExistence type="evidence at transcript level"/>
<gene>
    <name type="primary">Obp84a</name>
    <name type="synonym">Pbprp4</name>
    <name type="ORF">CG1176</name>
</gene>
<protein>
    <recommendedName>
        <fullName>General odorant-binding protein 84a</fullName>
    </recommendedName>
    <alternativeName>
        <fullName>Odorant-binding protein 84a</fullName>
    </alternativeName>
    <alternativeName>
        <fullName>Pheromone-binding protein-related protein 4</fullName>
        <shortName>PBPRP-4</shortName>
    </alternativeName>
</protein>
<evidence type="ECO:0000250" key="1"/>
<evidence type="ECO:0000255" key="2"/>
<evidence type="ECO:0000269" key="3">
    <source>
    </source>
</evidence>
<evidence type="ECO:0000305" key="4"/>
<comment type="subcellular location">
    <subcellularLocation>
        <location evidence="4">Secreted</location>
    </subcellularLocation>
    <text evidence="4">Secreted in the lumen of olfactory hairs.</text>
</comment>
<comment type="alternative products">
    <event type="alternative splicing"/>
    <isoform>
        <id>P54194-1</id>
        <name>A</name>
        <sequence type="displayed"/>
    </isoform>
    <isoform>
        <id>P54194-2</id>
        <name>C</name>
        <sequence type="described" ref="VSP_038967"/>
    </isoform>
</comment>
<comment type="tissue specificity">
    <text evidence="3">Present only in a small number of hairs scattered over the surface of the funiculus.</text>
</comment>
<feature type="signal peptide" evidence="2">
    <location>
        <begin position="1"/>
        <end position="24"/>
    </location>
</feature>
<feature type="chain" id="PRO_0000012589" description="General odorant-binding protein 84a">
    <location>
        <begin position="25"/>
        <end position="175"/>
    </location>
</feature>
<feature type="disulfide bond" evidence="1">
    <location>
        <begin position="103"/>
        <end position="151"/>
    </location>
</feature>
<feature type="disulfide bond" evidence="1">
    <location>
        <begin position="140"/>
        <end position="160"/>
    </location>
</feature>
<feature type="splice variant" id="VSP_038967" description="In isoform C." evidence="4">
    <original>YSAL</original>
    <variation>FHSLYLIGILSLIWVAAQDIVPDDPEVQMQMHAMFYTARVACADENLIPY</variation>
    <location>
        <begin position="2"/>
        <end position="5"/>
    </location>
</feature>
<name>OB84A_DROME</name>
<keyword id="KW-0025">Alternative splicing</keyword>
<keyword id="KW-1015">Disulfide bond</keyword>
<keyword id="KW-1185">Reference proteome</keyword>
<keyword id="KW-0964">Secreted</keyword>
<keyword id="KW-0732">Signal</keyword>
<accession>P54194</accession>
<accession>A8JQU8</accession>
<accession>B3DN19</accession>
<accession>Q9VI86</accession>
<dbReference type="EMBL" id="U05984">
    <property type="protein sequence ID" value="AAC46477.1"/>
    <property type="molecule type" value="mRNA"/>
</dbReference>
<dbReference type="EMBL" id="AE014297">
    <property type="protein sequence ID" value="AAF54039.1"/>
    <property type="molecule type" value="Genomic_DNA"/>
</dbReference>
<dbReference type="EMBL" id="AE014297">
    <property type="protein sequence ID" value="ABW08613.2"/>
    <property type="molecule type" value="Genomic_DNA"/>
</dbReference>
<dbReference type="EMBL" id="BT032807">
    <property type="protein sequence ID" value="ACD81821.1"/>
    <property type="molecule type" value="mRNA"/>
</dbReference>
<dbReference type="EMBL" id="BT032823">
    <property type="protein sequence ID" value="ACD81837.1"/>
    <property type="molecule type" value="mRNA"/>
</dbReference>
<dbReference type="RefSeq" id="NP_001097700.2">
    <molecule id="P54194-2"/>
    <property type="nucleotide sequence ID" value="NM_001104230.3"/>
</dbReference>
<dbReference type="RefSeq" id="NP_476990.1">
    <molecule id="P54194-1"/>
    <property type="nucleotide sequence ID" value="NM_057642.3"/>
</dbReference>
<dbReference type="SMR" id="P54194"/>
<dbReference type="FunCoup" id="P54194">
    <property type="interactions" value="35"/>
</dbReference>
<dbReference type="STRING" id="7227.FBpp0289293"/>
<dbReference type="PaxDb" id="7227-FBpp0289293"/>
<dbReference type="DNASU" id="40874"/>
<dbReference type="EnsemblMetazoa" id="FBtr0081597">
    <molecule id="P54194-1"/>
    <property type="protein sequence ID" value="FBpp0081115"/>
    <property type="gene ID" value="FBgn0011282"/>
</dbReference>
<dbReference type="EnsemblMetazoa" id="FBtr0300016">
    <molecule id="P54194-2"/>
    <property type="protein sequence ID" value="FBpp0289293"/>
    <property type="gene ID" value="FBgn0011282"/>
</dbReference>
<dbReference type="GeneID" id="40874"/>
<dbReference type="KEGG" id="dme:Dmel_CG1176"/>
<dbReference type="AGR" id="FB:FBgn0011282"/>
<dbReference type="CTD" id="40874"/>
<dbReference type="FlyBase" id="FBgn0011282">
    <property type="gene designation" value="Obp84a"/>
</dbReference>
<dbReference type="VEuPathDB" id="VectorBase:FBgn0011282"/>
<dbReference type="eggNOG" id="ENOG502SG48">
    <property type="taxonomic scope" value="Eukaryota"/>
</dbReference>
<dbReference type="HOGENOM" id="CLU_109094_0_0_1"/>
<dbReference type="InParanoid" id="P54194"/>
<dbReference type="OMA" id="DLTSMCY"/>
<dbReference type="OrthoDB" id="8184571at2759"/>
<dbReference type="PhylomeDB" id="P54194"/>
<dbReference type="BioGRID-ORCS" id="40874">
    <property type="hits" value="0 hits in 1 CRISPR screen"/>
</dbReference>
<dbReference type="GenomeRNAi" id="40874"/>
<dbReference type="PRO" id="PR:P54194"/>
<dbReference type="Proteomes" id="UP000000803">
    <property type="component" value="Chromosome 3R"/>
</dbReference>
<dbReference type="Bgee" id="FBgn0011282">
    <property type="expression patterns" value="Expressed in adult olfactory receptor neuron Ir75d in antenna and 28 other cell types or tissues"/>
</dbReference>
<dbReference type="GO" id="GO:0005576">
    <property type="term" value="C:extracellular region"/>
    <property type="evidence" value="ECO:0000255"/>
    <property type="project" value="FlyBase"/>
</dbReference>
<dbReference type="GO" id="GO:0005549">
    <property type="term" value="F:odorant binding"/>
    <property type="evidence" value="ECO:0000250"/>
    <property type="project" value="FlyBase"/>
</dbReference>
<dbReference type="GO" id="GO:0005550">
    <property type="term" value="F:pheromone binding"/>
    <property type="evidence" value="ECO:0000250"/>
    <property type="project" value="FlyBase"/>
</dbReference>
<dbReference type="GO" id="GO:0007606">
    <property type="term" value="P:sensory perception of chemical stimulus"/>
    <property type="evidence" value="ECO:0000250"/>
    <property type="project" value="FlyBase"/>
</dbReference>
<dbReference type="CDD" id="cd23992">
    <property type="entry name" value="PBP_GOBP"/>
    <property type="match status" value="1"/>
</dbReference>
<dbReference type="FunFam" id="1.10.238.20:FF:000027">
    <property type="entry name" value="General odorant-binding protein 84a"/>
    <property type="match status" value="1"/>
</dbReference>
<dbReference type="Gene3D" id="1.10.238.20">
    <property type="entry name" value="Pheromone/general odorant binding protein domain"/>
    <property type="match status" value="1"/>
</dbReference>
<dbReference type="InterPro" id="IPR006170">
    <property type="entry name" value="PBP/GOBP"/>
</dbReference>
<dbReference type="InterPro" id="IPR036728">
    <property type="entry name" value="PBP_GOBP_sf"/>
</dbReference>
<dbReference type="Pfam" id="PF01395">
    <property type="entry name" value="PBP_GOBP"/>
    <property type="match status" value="1"/>
</dbReference>
<dbReference type="SMART" id="SM00708">
    <property type="entry name" value="PhBP"/>
    <property type="match status" value="1"/>
</dbReference>
<dbReference type="SUPFAM" id="SSF47565">
    <property type="entry name" value="Insect pheromone/odorant-binding proteins"/>
    <property type="match status" value="1"/>
</dbReference>